<evidence type="ECO:0000255" key="1">
    <source>
        <dbReference type="HAMAP-Rule" id="MF_01584"/>
    </source>
</evidence>
<organism>
    <name type="scientific">Cronobacter sakazakii (strain ATCC BAA-894)</name>
    <name type="common">Enterobacter sakazakii</name>
    <dbReference type="NCBI Taxonomy" id="290339"/>
    <lineage>
        <taxon>Bacteria</taxon>
        <taxon>Pseudomonadati</taxon>
        <taxon>Pseudomonadota</taxon>
        <taxon>Gammaproteobacteria</taxon>
        <taxon>Enterobacterales</taxon>
        <taxon>Enterobacteriaceae</taxon>
        <taxon>Cronobacter</taxon>
    </lineage>
</organism>
<protein>
    <recommendedName>
        <fullName evidence="1">UPF0502 protein ESA_02280</fullName>
    </recommendedName>
</protein>
<feature type="chain" id="PRO_1000069297" description="UPF0502 protein ESA_02280">
    <location>
        <begin position="1"/>
        <end position="217"/>
    </location>
</feature>
<reference key="1">
    <citation type="journal article" date="2010" name="PLoS ONE">
        <title>Genome sequence of Cronobacter sakazakii BAA-894 and comparative genomic hybridization analysis with other Cronobacter species.</title>
        <authorList>
            <person name="Kucerova E."/>
            <person name="Clifton S.W."/>
            <person name="Xia X.Q."/>
            <person name="Long F."/>
            <person name="Porwollik S."/>
            <person name="Fulton L."/>
            <person name="Fronick C."/>
            <person name="Minx P."/>
            <person name="Kyung K."/>
            <person name="Warren W."/>
            <person name="Fulton R."/>
            <person name="Feng D."/>
            <person name="Wollam A."/>
            <person name="Shah N."/>
            <person name="Bhonagiri V."/>
            <person name="Nash W.E."/>
            <person name="Hallsworth-Pepin K."/>
            <person name="Wilson R.K."/>
            <person name="McClelland M."/>
            <person name="Forsythe S.J."/>
        </authorList>
    </citation>
    <scope>NUCLEOTIDE SEQUENCE [LARGE SCALE GENOMIC DNA]</scope>
    <source>
        <strain>ATCC BAA-894</strain>
    </source>
</reference>
<dbReference type="EMBL" id="CP000783">
    <property type="protein sequence ID" value="ABU77529.1"/>
    <property type="molecule type" value="Genomic_DNA"/>
</dbReference>
<dbReference type="RefSeq" id="WP_012125095.1">
    <property type="nucleotide sequence ID" value="NC_009778.1"/>
</dbReference>
<dbReference type="SMR" id="A7MG41"/>
<dbReference type="KEGG" id="esa:ESA_02280"/>
<dbReference type="PATRIC" id="fig|290339.8.peg.2040"/>
<dbReference type="HOGENOM" id="CLU_057831_2_0_6"/>
<dbReference type="Proteomes" id="UP000000260">
    <property type="component" value="Chromosome"/>
</dbReference>
<dbReference type="Gene3D" id="1.10.10.10">
    <property type="entry name" value="Winged helix-like DNA-binding domain superfamily/Winged helix DNA-binding domain"/>
    <property type="match status" value="2"/>
</dbReference>
<dbReference type="HAMAP" id="MF_01584">
    <property type="entry name" value="UPF0502"/>
    <property type="match status" value="1"/>
</dbReference>
<dbReference type="InterPro" id="IPR007432">
    <property type="entry name" value="DUF480"/>
</dbReference>
<dbReference type="InterPro" id="IPR036388">
    <property type="entry name" value="WH-like_DNA-bd_sf"/>
</dbReference>
<dbReference type="InterPro" id="IPR036390">
    <property type="entry name" value="WH_DNA-bd_sf"/>
</dbReference>
<dbReference type="NCBIfam" id="NF008413">
    <property type="entry name" value="PRK11239.1"/>
    <property type="match status" value="1"/>
</dbReference>
<dbReference type="PANTHER" id="PTHR38768">
    <property type="entry name" value="UPF0502 PROTEIN YCEH"/>
    <property type="match status" value="1"/>
</dbReference>
<dbReference type="PANTHER" id="PTHR38768:SF1">
    <property type="entry name" value="UPF0502 PROTEIN YCEH"/>
    <property type="match status" value="1"/>
</dbReference>
<dbReference type="Pfam" id="PF04337">
    <property type="entry name" value="DUF480"/>
    <property type="match status" value="1"/>
</dbReference>
<dbReference type="SUPFAM" id="SSF46785">
    <property type="entry name" value="Winged helix' DNA-binding domain"/>
    <property type="match status" value="2"/>
</dbReference>
<proteinExistence type="inferred from homology"/>
<gene>
    <name type="ordered locus">ESA_02280</name>
</gene>
<sequence>MKHQFSALEARVIGCMLEKQVTTPEQYPLSVNGVVTACNQKTNREPVMNLSEAQVQETLDQLVKRHYLRTVSGFGNRVTKYEQRFCNSEFGDLKFSPAEVALVTTLLLRGAQTPGELRSRAARMHEFSDTAALESALETLATREDGPFVTRLPREPGKRESRYMHLFCGEPDTATLAASNETAGVDTDALTARVEALELEVAELRERLESLLGHLGE</sequence>
<accession>A7MG41</accession>
<keyword id="KW-1185">Reference proteome</keyword>
<comment type="similarity">
    <text evidence="1">Belongs to the UPF0502 family.</text>
</comment>
<name>Y2280_CROS8</name>